<dbReference type="EC" id="2.7.7.8" evidence="1"/>
<dbReference type="EMBL" id="AE015451">
    <property type="protein sequence ID" value="AAN70281.1"/>
    <property type="molecule type" value="Genomic_DNA"/>
</dbReference>
<dbReference type="RefSeq" id="NP_746817.1">
    <property type="nucleotide sequence ID" value="NC_002947.4"/>
</dbReference>
<dbReference type="RefSeq" id="WP_010955356.1">
    <property type="nucleotide sequence ID" value="NZ_CP169744.1"/>
</dbReference>
<dbReference type="SMR" id="Q88DW0"/>
<dbReference type="STRING" id="160488.PP_4708"/>
<dbReference type="PaxDb" id="160488-PP_4708"/>
<dbReference type="GeneID" id="83682422"/>
<dbReference type="KEGG" id="ppu:PP_4708"/>
<dbReference type="PATRIC" id="fig|160488.4.peg.5018"/>
<dbReference type="eggNOG" id="COG1185">
    <property type="taxonomic scope" value="Bacteria"/>
</dbReference>
<dbReference type="HOGENOM" id="CLU_004217_2_2_6"/>
<dbReference type="OrthoDB" id="9804305at2"/>
<dbReference type="PhylomeDB" id="Q88DW0"/>
<dbReference type="BioCyc" id="PPUT160488:G1G01-5029-MONOMER"/>
<dbReference type="Proteomes" id="UP000000556">
    <property type="component" value="Chromosome"/>
</dbReference>
<dbReference type="GO" id="GO:0005829">
    <property type="term" value="C:cytosol"/>
    <property type="evidence" value="ECO:0007669"/>
    <property type="project" value="TreeGrafter"/>
</dbReference>
<dbReference type="GO" id="GO:0000175">
    <property type="term" value="F:3'-5'-RNA exonuclease activity"/>
    <property type="evidence" value="ECO:0007669"/>
    <property type="project" value="TreeGrafter"/>
</dbReference>
<dbReference type="GO" id="GO:0000287">
    <property type="term" value="F:magnesium ion binding"/>
    <property type="evidence" value="ECO:0007669"/>
    <property type="project" value="UniProtKB-UniRule"/>
</dbReference>
<dbReference type="GO" id="GO:0004654">
    <property type="term" value="F:polyribonucleotide nucleotidyltransferase activity"/>
    <property type="evidence" value="ECO:0007669"/>
    <property type="project" value="UniProtKB-UniRule"/>
</dbReference>
<dbReference type="GO" id="GO:0003723">
    <property type="term" value="F:RNA binding"/>
    <property type="evidence" value="ECO:0007669"/>
    <property type="project" value="UniProtKB-UniRule"/>
</dbReference>
<dbReference type="GO" id="GO:0006402">
    <property type="term" value="P:mRNA catabolic process"/>
    <property type="evidence" value="ECO:0007669"/>
    <property type="project" value="UniProtKB-UniRule"/>
</dbReference>
<dbReference type="GO" id="GO:0006396">
    <property type="term" value="P:RNA processing"/>
    <property type="evidence" value="ECO:0007669"/>
    <property type="project" value="InterPro"/>
</dbReference>
<dbReference type="CDD" id="cd02393">
    <property type="entry name" value="KH-I_PNPase"/>
    <property type="match status" value="1"/>
</dbReference>
<dbReference type="CDD" id="cd11363">
    <property type="entry name" value="RNase_PH_PNPase_1"/>
    <property type="match status" value="1"/>
</dbReference>
<dbReference type="CDD" id="cd11364">
    <property type="entry name" value="RNase_PH_PNPase_2"/>
    <property type="match status" value="1"/>
</dbReference>
<dbReference type="CDD" id="cd04472">
    <property type="entry name" value="S1_PNPase"/>
    <property type="match status" value="1"/>
</dbReference>
<dbReference type="FunFam" id="2.40.50.140:FF:000023">
    <property type="entry name" value="Polyribonucleotide nucleotidyltransferase"/>
    <property type="match status" value="1"/>
</dbReference>
<dbReference type="FunFam" id="3.30.1370.10:FF:000001">
    <property type="entry name" value="Polyribonucleotide nucleotidyltransferase"/>
    <property type="match status" value="1"/>
</dbReference>
<dbReference type="FunFam" id="3.30.230.70:FF:000001">
    <property type="entry name" value="Polyribonucleotide nucleotidyltransferase"/>
    <property type="match status" value="1"/>
</dbReference>
<dbReference type="FunFam" id="3.30.230.70:FF:000002">
    <property type="entry name" value="Polyribonucleotide nucleotidyltransferase"/>
    <property type="match status" value="1"/>
</dbReference>
<dbReference type="Gene3D" id="3.30.230.70">
    <property type="entry name" value="GHMP Kinase, N-terminal domain"/>
    <property type="match status" value="2"/>
</dbReference>
<dbReference type="Gene3D" id="3.30.1370.10">
    <property type="entry name" value="K Homology domain, type 1"/>
    <property type="match status" value="1"/>
</dbReference>
<dbReference type="Gene3D" id="2.40.50.140">
    <property type="entry name" value="Nucleic acid-binding proteins"/>
    <property type="match status" value="1"/>
</dbReference>
<dbReference type="HAMAP" id="MF_01595">
    <property type="entry name" value="PNPase"/>
    <property type="match status" value="1"/>
</dbReference>
<dbReference type="InterPro" id="IPR001247">
    <property type="entry name" value="ExoRNase_PH_dom1"/>
</dbReference>
<dbReference type="InterPro" id="IPR015847">
    <property type="entry name" value="ExoRNase_PH_dom2"/>
</dbReference>
<dbReference type="InterPro" id="IPR036345">
    <property type="entry name" value="ExoRNase_PH_dom2_sf"/>
</dbReference>
<dbReference type="InterPro" id="IPR004087">
    <property type="entry name" value="KH_dom"/>
</dbReference>
<dbReference type="InterPro" id="IPR004088">
    <property type="entry name" value="KH_dom_type_1"/>
</dbReference>
<dbReference type="InterPro" id="IPR036612">
    <property type="entry name" value="KH_dom_type_1_sf"/>
</dbReference>
<dbReference type="InterPro" id="IPR012340">
    <property type="entry name" value="NA-bd_OB-fold"/>
</dbReference>
<dbReference type="InterPro" id="IPR012162">
    <property type="entry name" value="PNPase"/>
</dbReference>
<dbReference type="InterPro" id="IPR027408">
    <property type="entry name" value="PNPase/RNase_PH_dom_sf"/>
</dbReference>
<dbReference type="InterPro" id="IPR015848">
    <property type="entry name" value="PNPase_PH_RNA-bd_bac/org-type"/>
</dbReference>
<dbReference type="InterPro" id="IPR020568">
    <property type="entry name" value="Ribosomal_Su5_D2-typ_SF"/>
</dbReference>
<dbReference type="InterPro" id="IPR003029">
    <property type="entry name" value="S1_domain"/>
</dbReference>
<dbReference type="NCBIfam" id="TIGR03591">
    <property type="entry name" value="polynuc_phos"/>
    <property type="match status" value="1"/>
</dbReference>
<dbReference type="NCBIfam" id="NF008805">
    <property type="entry name" value="PRK11824.1"/>
    <property type="match status" value="1"/>
</dbReference>
<dbReference type="PANTHER" id="PTHR11252">
    <property type="entry name" value="POLYRIBONUCLEOTIDE NUCLEOTIDYLTRANSFERASE"/>
    <property type="match status" value="1"/>
</dbReference>
<dbReference type="PANTHER" id="PTHR11252:SF0">
    <property type="entry name" value="POLYRIBONUCLEOTIDE NUCLEOTIDYLTRANSFERASE 1, MITOCHONDRIAL"/>
    <property type="match status" value="1"/>
</dbReference>
<dbReference type="Pfam" id="PF00013">
    <property type="entry name" value="KH_1"/>
    <property type="match status" value="1"/>
</dbReference>
<dbReference type="Pfam" id="PF03726">
    <property type="entry name" value="PNPase"/>
    <property type="match status" value="1"/>
</dbReference>
<dbReference type="Pfam" id="PF01138">
    <property type="entry name" value="RNase_PH"/>
    <property type="match status" value="2"/>
</dbReference>
<dbReference type="Pfam" id="PF03725">
    <property type="entry name" value="RNase_PH_C"/>
    <property type="match status" value="2"/>
</dbReference>
<dbReference type="Pfam" id="PF00575">
    <property type="entry name" value="S1"/>
    <property type="match status" value="1"/>
</dbReference>
<dbReference type="PIRSF" id="PIRSF005499">
    <property type="entry name" value="PNPase"/>
    <property type="match status" value="1"/>
</dbReference>
<dbReference type="SMART" id="SM00322">
    <property type="entry name" value="KH"/>
    <property type="match status" value="1"/>
</dbReference>
<dbReference type="SMART" id="SM00316">
    <property type="entry name" value="S1"/>
    <property type="match status" value="1"/>
</dbReference>
<dbReference type="SUPFAM" id="SSF54791">
    <property type="entry name" value="Eukaryotic type KH-domain (KH-domain type I)"/>
    <property type="match status" value="1"/>
</dbReference>
<dbReference type="SUPFAM" id="SSF50249">
    <property type="entry name" value="Nucleic acid-binding proteins"/>
    <property type="match status" value="1"/>
</dbReference>
<dbReference type="SUPFAM" id="SSF55666">
    <property type="entry name" value="Ribonuclease PH domain 2-like"/>
    <property type="match status" value="2"/>
</dbReference>
<dbReference type="SUPFAM" id="SSF54211">
    <property type="entry name" value="Ribosomal protein S5 domain 2-like"/>
    <property type="match status" value="2"/>
</dbReference>
<dbReference type="PROSITE" id="PS50084">
    <property type="entry name" value="KH_TYPE_1"/>
    <property type="match status" value="1"/>
</dbReference>
<dbReference type="PROSITE" id="PS50126">
    <property type="entry name" value="S1"/>
    <property type="match status" value="1"/>
</dbReference>
<keyword id="KW-0963">Cytoplasm</keyword>
<keyword id="KW-0460">Magnesium</keyword>
<keyword id="KW-0479">Metal-binding</keyword>
<keyword id="KW-0548">Nucleotidyltransferase</keyword>
<keyword id="KW-1185">Reference proteome</keyword>
<keyword id="KW-0694">RNA-binding</keyword>
<keyword id="KW-0808">Transferase</keyword>
<organism>
    <name type="scientific">Pseudomonas putida (strain ATCC 47054 / DSM 6125 / CFBP 8728 / NCIMB 11950 / KT2440)</name>
    <dbReference type="NCBI Taxonomy" id="160488"/>
    <lineage>
        <taxon>Bacteria</taxon>
        <taxon>Pseudomonadati</taxon>
        <taxon>Pseudomonadota</taxon>
        <taxon>Gammaproteobacteria</taxon>
        <taxon>Pseudomonadales</taxon>
        <taxon>Pseudomonadaceae</taxon>
        <taxon>Pseudomonas</taxon>
    </lineage>
</organism>
<feature type="chain" id="PRO_0000329785" description="Polyribonucleotide nucleotidyltransferase">
    <location>
        <begin position="1"/>
        <end position="701"/>
    </location>
</feature>
<feature type="domain" description="KH" evidence="1">
    <location>
        <begin position="554"/>
        <end position="613"/>
    </location>
</feature>
<feature type="domain" description="S1 motif" evidence="1">
    <location>
        <begin position="623"/>
        <end position="691"/>
    </location>
</feature>
<feature type="binding site" evidence="1">
    <location>
        <position position="487"/>
    </location>
    <ligand>
        <name>Mg(2+)</name>
        <dbReference type="ChEBI" id="CHEBI:18420"/>
    </ligand>
</feature>
<feature type="binding site" evidence="1">
    <location>
        <position position="493"/>
    </location>
    <ligand>
        <name>Mg(2+)</name>
        <dbReference type="ChEBI" id="CHEBI:18420"/>
    </ligand>
</feature>
<sequence length="701" mass="75011">MNPVIKTFQFGQSTVTLETGRIARQATGAVLVTVDNDVTVLVTVVGAKQADPGKGFFPLSVHYQEKTYAAGKIPGGFFKREGRPSEKETLTSRLIDRPIRPLFPEGFMNEVQVVCTVVSTSKKTDPDIAAMIGTSAALAISGIPFEGPIGAARVAFHESTGYLLNPTYEQLAASSLDMVVAGTSDAVLMVESEAQELTEDQMLGAVLFAHDEFQAVIQAVKELAAEAGKPTWDWKPAVANTELFNAIRAEFGEAVSQGYTITVKADRYARLGELRDQAVAKFSGEEGQPSASEVKEIFGEIEYRTVRENIVNGKPRIDGRDNKTVRPLNIEVGVLPKTHGSALFTRGETQALVVATLGTARDAQLLDTLEGEKKDPFMLHYNFPPFSVGECGRMGGAGRREIGHGRLARRSVQAMLPAADVFPYTIRVVSEITESNGSSSMASVCGASLALMDAGVPMKAPVAGIAMGLVKEGDKFAVLTDILGDEDHLGDMDFKVAGTAKGVTALQMDIKINGITEEIMEIALGQALEARLNILGQMNQVIGQSRTELSANAPTMIAMKIDTDKIRDVIGKGGATIRAICEETKASIDIEDDGSIKIFGETKEAADAAKQRILGITAEAEIGKIYVGKVERIVDFGAFVNILPGKDGLVHISMLSDARVEKVTDILKEGQEVEVLVLDVDNRGRIKLSIKDVPAAKASGV</sequence>
<evidence type="ECO:0000255" key="1">
    <source>
        <dbReference type="HAMAP-Rule" id="MF_01595"/>
    </source>
</evidence>
<protein>
    <recommendedName>
        <fullName evidence="1">Polyribonucleotide nucleotidyltransferase</fullName>
        <ecNumber evidence="1">2.7.7.8</ecNumber>
    </recommendedName>
    <alternativeName>
        <fullName evidence="1">Polynucleotide phosphorylase</fullName>
        <shortName evidence="1">PNPase</shortName>
    </alternativeName>
</protein>
<gene>
    <name evidence="1" type="primary">pnp</name>
    <name type="ordered locus">PP_4708</name>
</gene>
<proteinExistence type="inferred from homology"/>
<comment type="function">
    <text evidence="1">Involved in mRNA degradation. Catalyzes the phosphorolysis of single-stranded polyribonucleotides processively in the 3'- to 5'-direction.</text>
</comment>
<comment type="catalytic activity">
    <reaction evidence="1">
        <text>RNA(n+1) + phosphate = RNA(n) + a ribonucleoside 5'-diphosphate</text>
        <dbReference type="Rhea" id="RHEA:22096"/>
        <dbReference type="Rhea" id="RHEA-COMP:14527"/>
        <dbReference type="Rhea" id="RHEA-COMP:17342"/>
        <dbReference type="ChEBI" id="CHEBI:43474"/>
        <dbReference type="ChEBI" id="CHEBI:57930"/>
        <dbReference type="ChEBI" id="CHEBI:140395"/>
        <dbReference type="EC" id="2.7.7.8"/>
    </reaction>
</comment>
<comment type="cofactor">
    <cofactor evidence="1">
        <name>Mg(2+)</name>
        <dbReference type="ChEBI" id="CHEBI:18420"/>
    </cofactor>
</comment>
<comment type="subunit">
    <text evidence="1">Component of the RNA degradosome, which is a multiprotein complex involved in RNA processing and mRNA degradation.</text>
</comment>
<comment type="subcellular location">
    <subcellularLocation>
        <location evidence="1">Cytoplasm</location>
    </subcellularLocation>
</comment>
<comment type="similarity">
    <text evidence="1">Belongs to the polyribonucleotide nucleotidyltransferase family.</text>
</comment>
<name>PNP_PSEPK</name>
<reference key="1">
    <citation type="journal article" date="2002" name="Environ. Microbiol.">
        <title>Complete genome sequence and comparative analysis of the metabolically versatile Pseudomonas putida KT2440.</title>
        <authorList>
            <person name="Nelson K.E."/>
            <person name="Weinel C."/>
            <person name="Paulsen I.T."/>
            <person name="Dodson R.J."/>
            <person name="Hilbert H."/>
            <person name="Martins dos Santos V.A.P."/>
            <person name="Fouts D.E."/>
            <person name="Gill S.R."/>
            <person name="Pop M."/>
            <person name="Holmes M."/>
            <person name="Brinkac L.M."/>
            <person name="Beanan M.J."/>
            <person name="DeBoy R.T."/>
            <person name="Daugherty S.C."/>
            <person name="Kolonay J.F."/>
            <person name="Madupu R."/>
            <person name="Nelson W.C."/>
            <person name="White O."/>
            <person name="Peterson J.D."/>
            <person name="Khouri H.M."/>
            <person name="Hance I."/>
            <person name="Chris Lee P."/>
            <person name="Holtzapple E.K."/>
            <person name="Scanlan D."/>
            <person name="Tran K."/>
            <person name="Moazzez A."/>
            <person name="Utterback T.R."/>
            <person name="Rizzo M."/>
            <person name="Lee K."/>
            <person name="Kosack D."/>
            <person name="Moestl D."/>
            <person name="Wedler H."/>
            <person name="Lauber J."/>
            <person name="Stjepandic D."/>
            <person name="Hoheisel J."/>
            <person name="Straetz M."/>
            <person name="Heim S."/>
            <person name="Kiewitz C."/>
            <person name="Eisen J.A."/>
            <person name="Timmis K.N."/>
            <person name="Duesterhoeft A."/>
            <person name="Tuemmler B."/>
            <person name="Fraser C.M."/>
        </authorList>
    </citation>
    <scope>NUCLEOTIDE SEQUENCE [LARGE SCALE GENOMIC DNA]</scope>
    <source>
        <strain>ATCC 47054 / DSM 6125 / CFBP 8728 / NCIMB 11950 / KT2440</strain>
    </source>
</reference>
<accession>Q88DW0</accession>